<comment type="function">
    <text evidence="1">Part of the ABC transporter complex PstSACB involved in phosphate import. Responsible for energy coupling to the transport system.</text>
</comment>
<comment type="catalytic activity">
    <reaction evidence="1">
        <text>phosphate(out) + ATP + H2O = ADP + 2 phosphate(in) + H(+)</text>
        <dbReference type="Rhea" id="RHEA:24440"/>
        <dbReference type="ChEBI" id="CHEBI:15377"/>
        <dbReference type="ChEBI" id="CHEBI:15378"/>
        <dbReference type="ChEBI" id="CHEBI:30616"/>
        <dbReference type="ChEBI" id="CHEBI:43474"/>
        <dbReference type="ChEBI" id="CHEBI:456216"/>
        <dbReference type="EC" id="7.3.2.1"/>
    </reaction>
</comment>
<comment type="subunit">
    <text evidence="1">The complex is composed of two ATP-binding proteins (PstB), two transmembrane proteins (PstC and PstA) and a solute-binding protein (PstS).</text>
</comment>
<comment type="subcellular location">
    <subcellularLocation>
        <location evidence="1">Cell membrane</location>
        <topology evidence="1">Peripheral membrane protein</topology>
    </subcellularLocation>
</comment>
<comment type="similarity">
    <text evidence="1">Belongs to the ABC transporter superfamily. Phosphate importer (TC 3.A.1.7) family.</text>
</comment>
<name>PSTB1_STRT2</name>
<gene>
    <name evidence="1" type="primary">pstB1</name>
    <name type="ordered locus">stu1004</name>
</gene>
<organism>
    <name type="scientific">Streptococcus thermophilus (strain ATCC BAA-250 / LMG 18311)</name>
    <dbReference type="NCBI Taxonomy" id="264199"/>
    <lineage>
        <taxon>Bacteria</taxon>
        <taxon>Bacillati</taxon>
        <taxon>Bacillota</taxon>
        <taxon>Bacilli</taxon>
        <taxon>Lactobacillales</taxon>
        <taxon>Streptococcaceae</taxon>
        <taxon>Streptococcus</taxon>
    </lineage>
</organism>
<dbReference type="EC" id="7.3.2.1" evidence="1"/>
<dbReference type="EMBL" id="CP000023">
    <property type="protein sequence ID" value="AAV60664.1"/>
    <property type="molecule type" value="Genomic_DNA"/>
</dbReference>
<dbReference type="SMR" id="Q5M4F3"/>
<dbReference type="STRING" id="264199.stu1004"/>
<dbReference type="KEGG" id="stl:stu1004"/>
<dbReference type="eggNOG" id="COG1117">
    <property type="taxonomic scope" value="Bacteria"/>
</dbReference>
<dbReference type="HOGENOM" id="CLU_000604_1_22_9"/>
<dbReference type="Proteomes" id="UP000001170">
    <property type="component" value="Chromosome"/>
</dbReference>
<dbReference type="GO" id="GO:0005886">
    <property type="term" value="C:plasma membrane"/>
    <property type="evidence" value="ECO:0007669"/>
    <property type="project" value="UniProtKB-SubCell"/>
</dbReference>
<dbReference type="GO" id="GO:0005524">
    <property type="term" value="F:ATP binding"/>
    <property type="evidence" value="ECO:0007669"/>
    <property type="project" value="UniProtKB-KW"/>
</dbReference>
<dbReference type="GO" id="GO:0016887">
    <property type="term" value="F:ATP hydrolysis activity"/>
    <property type="evidence" value="ECO:0007669"/>
    <property type="project" value="InterPro"/>
</dbReference>
<dbReference type="GO" id="GO:0015415">
    <property type="term" value="F:ATPase-coupled phosphate ion transmembrane transporter activity"/>
    <property type="evidence" value="ECO:0007669"/>
    <property type="project" value="UniProtKB-EC"/>
</dbReference>
<dbReference type="GO" id="GO:0035435">
    <property type="term" value="P:phosphate ion transmembrane transport"/>
    <property type="evidence" value="ECO:0007669"/>
    <property type="project" value="InterPro"/>
</dbReference>
<dbReference type="CDD" id="cd03260">
    <property type="entry name" value="ABC_PstB_phosphate_transporter"/>
    <property type="match status" value="1"/>
</dbReference>
<dbReference type="Gene3D" id="3.40.50.300">
    <property type="entry name" value="P-loop containing nucleotide triphosphate hydrolases"/>
    <property type="match status" value="1"/>
</dbReference>
<dbReference type="InterPro" id="IPR003593">
    <property type="entry name" value="AAA+_ATPase"/>
</dbReference>
<dbReference type="InterPro" id="IPR003439">
    <property type="entry name" value="ABC_transporter-like_ATP-bd"/>
</dbReference>
<dbReference type="InterPro" id="IPR017871">
    <property type="entry name" value="ABC_transporter-like_CS"/>
</dbReference>
<dbReference type="InterPro" id="IPR027417">
    <property type="entry name" value="P-loop_NTPase"/>
</dbReference>
<dbReference type="InterPro" id="IPR005670">
    <property type="entry name" value="PstB-like"/>
</dbReference>
<dbReference type="NCBIfam" id="TIGR00972">
    <property type="entry name" value="3a0107s01c2"/>
    <property type="match status" value="1"/>
</dbReference>
<dbReference type="PANTHER" id="PTHR43423">
    <property type="entry name" value="ABC TRANSPORTER I FAMILY MEMBER 17"/>
    <property type="match status" value="1"/>
</dbReference>
<dbReference type="PANTHER" id="PTHR43423:SF10">
    <property type="entry name" value="PHOSPHATE IMPORT ATP-BINDING PROTEIN PSTB 2"/>
    <property type="match status" value="1"/>
</dbReference>
<dbReference type="Pfam" id="PF00005">
    <property type="entry name" value="ABC_tran"/>
    <property type="match status" value="1"/>
</dbReference>
<dbReference type="SMART" id="SM00382">
    <property type="entry name" value="AAA"/>
    <property type="match status" value="1"/>
</dbReference>
<dbReference type="SUPFAM" id="SSF52540">
    <property type="entry name" value="P-loop containing nucleoside triphosphate hydrolases"/>
    <property type="match status" value="1"/>
</dbReference>
<dbReference type="PROSITE" id="PS00211">
    <property type="entry name" value="ABC_TRANSPORTER_1"/>
    <property type="match status" value="1"/>
</dbReference>
<dbReference type="PROSITE" id="PS50893">
    <property type="entry name" value="ABC_TRANSPORTER_2"/>
    <property type="match status" value="1"/>
</dbReference>
<dbReference type="PROSITE" id="PS51238">
    <property type="entry name" value="PSTB"/>
    <property type="match status" value="1"/>
</dbReference>
<sequence>MTKYNWDERHIITFPEKKLALETKDLHVYYGQKEAINGIDMQFEKNKITALIGPSGCGKSTFLRSLNRMNDTIDVAKVTGQILYEGVDVNASNINVYEMRKHIGMVFQRPNPFAKSIYKNITFAHECNGVKDKQTLDEIVETSLKQAGLWEQVKDDLHKSAFTLSGGQQQRLCIARAIAVKPQILLMDEPAASLDPVATMQLEETMFELKEDYSIIIVTHNMQQAARASDYTAFFYLGDLIEYDETKKIFQDAALQSTSDYVSGRFG</sequence>
<reference key="1">
    <citation type="journal article" date="2004" name="Nat. Biotechnol.">
        <title>Complete sequence and comparative genome analysis of the dairy bacterium Streptococcus thermophilus.</title>
        <authorList>
            <person name="Bolotin A."/>
            <person name="Quinquis B."/>
            <person name="Renault P."/>
            <person name="Sorokin A."/>
            <person name="Ehrlich S.D."/>
            <person name="Kulakauskas S."/>
            <person name="Lapidus A."/>
            <person name="Goltsman E."/>
            <person name="Mazur M."/>
            <person name="Pusch G.D."/>
            <person name="Fonstein M."/>
            <person name="Overbeek R."/>
            <person name="Kyprides N."/>
            <person name="Purnelle B."/>
            <person name="Prozzi D."/>
            <person name="Ngui K."/>
            <person name="Masuy D."/>
            <person name="Hancy F."/>
            <person name="Burteau S."/>
            <person name="Boutry M."/>
            <person name="Delcour J."/>
            <person name="Goffeau A."/>
            <person name="Hols P."/>
        </authorList>
    </citation>
    <scope>NUCLEOTIDE SEQUENCE [LARGE SCALE GENOMIC DNA]</scope>
    <source>
        <strain>ATCC BAA-250 / LMG 18311</strain>
    </source>
</reference>
<keyword id="KW-0067">ATP-binding</keyword>
<keyword id="KW-1003">Cell membrane</keyword>
<keyword id="KW-0472">Membrane</keyword>
<keyword id="KW-0547">Nucleotide-binding</keyword>
<keyword id="KW-0592">Phosphate transport</keyword>
<keyword id="KW-1185">Reference proteome</keyword>
<keyword id="KW-1278">Translocase</keyword>
<keyword id="KW-0813">Transport</keyword>
<accession>Q5M4F3</accession>
<evidence type="ECO:0000255" key="1">
    <source>
        <dbReference type="HAMAP-Rule" id="MF_01702"/>
    </source>
</evidence>
<feature type="chain" id="PRO_0000272551" description="Phosphate import ATP-binding protein PstB 1">
    <location>
        <begin position="1"/>
        <end position="267"/>
    </location>
</feature>
<feature type="domain" description="ABC transporter" evidence="1">
    <location>
        <begin position="21"/>
        <end position="262"/>
    </location>
</feature>
<feature type="binding site" evidence="1">
    <location>
        <begin position="53"/>
        <end position="60"/>
    </location>
    <ligand>
        <name>ATP</name>
        <dbReference type="ChEBI" id="CHEBI:30616"/>
    </ligand>
</feature>
<protein>
    <recommendedName>
        <fullName evidence="1">Phosphate import ATP-binding protein PstB 1</fullName>
        <ecNumber evidence="1">7.3.2.1</ecNumber>
    </recommendedName>
    <alternativeName>
        <fullName evidence="1">ABC phosphate transporter 1</fullName>
    </alternativeName>
    <alternativeName>
        <fullName evidence="1">Phosphate-transporting ATPase 1</fullName>
    </alternativeName>
</protein>
<proteinExistence type="inferred from homology"/>